<accession>Q1DRC2</accession>
<accession>J0HF82</accession>
<feature type="chain" id="PRO_0000365082" description="Mitotic-spindle organizing protein 1">
    <location>
        <begin position="1"/>
        <end position="72"/>
    </location>
</feature>
<organism>
    <name type="scientific">Coccidioides immitis (strain RS)</name>
    <name type="common">Valley fever fungus</name>
    <dbReference type="NCBI Taxonomy" id="246410"/>
    <lineage>
        <taxon>Eukaryota</taxon>
        <taxon>Fungi</taxon>
        <taxon>Dikarya</taxon>
        <taxon>Ascomycota</taxon>
        <taxon>Pezizomycotina</taxon>
        <taxon>Eurotiomycetes</taxon>
        <taxon>Eurotiomycetidae</taxon>
        <taxon>Onygenales</taxon>
        <taxon>Onygenaceae</taxon>
        <taxon>Coccidioides</taxon>
    </lineage>
</organism>
<sequence>MPSQQDEKRQAAREVIDILHEISTLLNTHLDRTELSLCVSLIENGVNPEALATVIKELRKESSQSRGLVGGE</sequence>
<proteinExistence type="inferred from homology"/>
<evidence type="ECO:0000250" key="1"/>
<evidence type="ECO:0000305" key="2"/>
<name>MZT1_COCIM</name>
<gene>
    <name type="ORF">CIMG_07141</name>
</gene>
<dbReference type="EMBL" id="GG704912">
    <property type="protein sequence ID" value="EAS31662.3"/>
    <property type="molecule type" value="Genomic_DNA"/>
</dbReference>
<dbReference type="RefSeq" id="XP_001243245.1">
    <property type="nucleotide sequence ID" value="XM_001243244.1"/>
</dbReference>
<dbReference type="SMR" id="Q1DRC2"/>
<dbReference type="STRING" id="246410.Q1DRC2"/>
<dbReference type="GeneID" id="24164739"/>
<dbReference type="KEGG" id="cim:CIMG_13112"/>
<dbReference type="VEuPathDB" id="FungiDB:CIMG_13112"/>
<dbReference type="InParanoid" id="Q1DRC2"/>
<dbReference type="OMA" id="LSICVGM"/>
<dbReference type="OrthoDB" id="48571at2759"/>
<dbReference type="Proteomes" id="UP000001261">
    <property type="component" value="Unassembled WGS sequence"/>
</dbReference>
<dbReference type="GO" id="GO:0005737">
    <property type="term" value="C:cytoplasm"/>
    <property type="evidence" value="ECO:0007669"/>
    <property type="project" value="UniProtKB-KW"/>
</dbReference>
<dbReference type="GO" id="GO:0000931">
    <property type="term" value="C:gamma-tubulin ring complex"/>
    <property type="evidence" value="ECO:0007669"/>
    <property type="project" value="InterPro"/>
</dbReference>
<dbReference type="GO" id="GO:0031021">
    <property type="term" value="C:interphase microtubule organizing center"/>
    <property type="evidence" value="ECO:0007669"/>
    <property type="project" value="TreeGrafter"/>
</dbReference>
<dbReference type="GO" id="GO:0044732">
    <property type="term" value="C:mitotic spindle pole body"/>
    <property type="evidence" value="ECO:0007669"/>
    <property type="project" value="TreeGrafter"/>
</dbReference>
<dbReference type="GO" id="GO:0005819">
    <property type="term" value="C:spindle"/>
    <property type="evidence" value="ECO:0007669"/>
    <property type="project" value="TreeGrafter"/>
</dbReference>
<dbReference type="GO" id="GO:0033566">
    <property type="term" value="P:gamma-tubulin complex localization"/>
    <property type="evidence" value="ECO:0007669"/>
    <property type="project" value="InterPro"/>
</dbReference>
<dbReference type="GO" id="GO:0051415">
    <property type="term" value="P:microtubule nucleation by interphase microtubule organizing center"/>
    <property type="evidence" value="ECO:0007669"/>
    <property type="project" value="TreeGrafter"/>
</dbReference>
<dbReference type="GO" id="GO:0090307">
    <property type="term" value="P:mitotic spindle assembly"/>
    <property type="evidence" value="ECO:0007669"/>
    <property type="project" value="TreeGrafter"/>
</dbReference>
<dbReference type="InterPro" id="IPR022214">
    <property type="entry name" value="MZT1"/>
</dbReference>
<dbReference type="PANTHER" id="PTHR28520">
    <property type="entry name" value="MITOTIC-SPINDLE ORGANIZING PROTEIN 1"/>
    <property type="match status" value="1"/>
</dbReference>
<dbReference type="PANTHER" id="PTHR28520:SF2">
    <property type="entry name" value="MITOTIC-SPINDLE ORGANIZING PROTEIN 1"/>
    <property type="match status" value="1"/>
</dbReference>
<dbReference type="Pfam" id="PF12554">
    <property type="entry name" value="MOZART1"/>
    <property type="match status" value="1"/>
</dbReference>
<comment type="function">
    <text evidence="1">Required for gamma-tubulin complex recruitment to the microtubule organizing center (MTOC).</text>
</comment>
<comment type="subunit">
    <text evidence="1">Part of the gamma-tubulin complex.</text>
</comment>
<comment type="subcellular location">
    <subcellularLocation>
        <location evidence="1">Cytoplasm</location>
        <location evidence="1">Cytoskeleton</location>
        <location evidence="1">Microtubule organizing center</location>
        <location evidence="1">Spindle pole body</location>
    </subcellularLocation>
</comment>
<comment type="similarity">
    <text evidence="2">Belongs to the MOZART1 family.</text>
</comment>
<reference key="1">
    <citation type="journal article" date="2009" name="Genome Res.">
        <title>Comparative genomic analyses of the human fungal pathogens Coccidioides and their relatives.</title>
        <authorList>
            <person name="Sharpton T.J."/>
            <person name="Stajich J.E."/>
            <person name="Rounsley S.D."/>
            <person name="Gardner M.J."/>
            <person name="Wortman J.R."/>
            <person name="Jordar V.S."/>
            <person name="Maiti R."/>
            <person name="Kodira C.D."/>
            <person name="Neafsey D.E."/>
            <person name="Zeng Q."/>
            <person name="Hung C.-Y."/>
            <person name="McMahan C."/>
            <person name="Muszewska A."/>
            <person name="Grynberg M."/>
            <person name="Mandel M.A."/>
            <person name="Kellner E.M."/>
            <person name="Barker B.M."/>
            <person name="Galgiani J.N."/>
            <person name="Orbach M.J."/>
            <person name="Kirkland T.N."/>
            <person name="Cole G.T."/>
            <person name="Henn M.R."/>
            <person name="Birren B.W."/>
            <person name="Taylor J.W."/>
        </authorList>
    </citation>
    <scope>NUCLEOTIDE SEQUENCE [LARGE SCALE GENOMIC DNA]</scope>
    <source>
        <strain>RS</strain>
    </source>
</reference>
<reference key="2">
    <citation type="journal article" date="2010" name="Genome Res.">
        <title>Population genomic sequencing of Coccidioides fungi reveals recent hybridization and transposon control.</title>
        <authorList>
            <person name="Neafsey D.E."/>
            <person name="Barker B.M."/>
            <person name="Sharpton T.J."/>
            <person name="Stajich J.E."/>
            <person name="Park D.J."/>
            <person name="Whiston E."/>
            <person name="Hung C.-Y."/>
            <person name="McMahan C."/>
            <person name="White J."/>
            <person name="Sykes S."/>
            <person name="Heiman D."/>
            <person name="Young S."/>
            <person name="Zeng Q."/>
            <person name="Abouelleil A."/>
            <person name="Aftuck L."/>
            <person name="Bessette D."/>
            <person name="Brown A."/>
            <person name="FitzGerald M."/>
            <person name="Lui A."/>
            <person name="Macdonald J.P."/>
            <person name="Priest M."/>
            <person name="Orbach M.J."/>
            <person name="Galgiani J.N."/>
            <person name="Kirkland T.N."/>
            <person name="Cole G.T."/>
            <person name="Birren B.W."/>
            <person name="Henn M.R."/>
            <person name="Taylor J.W."/>
            <person name="Rounsley S.D."/>
        </authorList>
    </citation>
    <scope>GENOME REANNOTATION</scope>
    <source>
        <strain>RS</strain>
    </source>
</reference>
<protein>
    <recommendedName>
        <fullName>Mitotic-spindle organizing protein 1</fullName>
    </recommendedName>
    <alternativeName>
        <fullName>Mitotic-spindle organizing protein associated with a ring of gamma-tubulin 1</fullName>
    </alternativeName>
</protein>
<keyword id="KW-0963">Cytoplasm</keyword>
<keyword id="KW-0206">Cytoskeleton</keyword>
<keyword id="KW-1185">Reference proteome</keyword>